<feature type="chain" id="PRO_0000313608" description="Protein jagunal homolog 1">
    <location>
        <begin position="1"/>
        <end position="183"/>
    </location>
</feature>
<feature type="topological domain" description="Cytoplasmic" evidence="1">
    <location>
        <begin position="1"/>
        <end position="39"/>
    </location>
</feature>
<feature type="transmembrane region" description="Helical" evidence="1">
    <location>
        <begin position="40"/>
        <end position="60"/>
    </location>
</feature>
<feature type="topological domain" description="Lumenal" evidence="1">
    <location>
        <begin position="61"/>
        <end position="71"/>
    </location>
</feature>
<feature type="transmembrane region" description="Helical" evidence="1">
    <location>
        <begin position="72"/>
        <end position="92"/>
    </location>
</feature>
<feature type="topological domain" description="Cytoplasmic" evidence="1">
    <location>
        <begin position="93"/>
        <end position="96"/>
    </location>
</feature>
<feature type="transmembrane region" description="Helical" evidence="1">
    <location>
        <begin position="97"/>
        <end position="117"/>
    </location>
</feature>
<feature type="topological domain" description="Lumenal" evidence="1">
    <location>
        <begin position="118"/>
        <end position="137"/>
    </location>
</feature>
<feature type="transmembrane region" description="Helical" evidence="1">
    <location>
        <begin position="138"/>
        <end position="158"/>
    </location>
</feature>
<feature type="topological domain" description="Cytoplasmic" evidence="1">
    <location>
        <begin position="159"/>
        <end position="183"/>
    </location>
</feature>
<feature type="modified residue" description="Phosphoserine" evidence="5">
    <location>
        <position position="3"/>
    </location>
</feature>
<feature type="sequence variant" id="VAR_071795" description="In SCN6; dbSNP:rs786205704." evidence="2">
    <original>G</original>
    <variation>S</variation>
    <location>
        <position position="14"/>
    </location>
</feature>
<feature type="sequence variant" id="VAR_071796" description="In SCN6; dbSNP:rs777966677." evidence="2">
    <original>R</original>
    <variation>Q</variation>
    <location>
        <position position="20"/>
    </location>
</feature>
<feature type="sequence variant" id="VAR_071797" description="In SCN6; dbSNP:rs587777729." evidence="2">
    <original>E</original>
    <variation>D</variation>
    <location>
        <position position="21"/>
    </location>
</feature>
<feature type="sequence variant" id="VAR_071798" description="In SCN6; dbSNP:rs587777728." evidence="2">
    <original>H</original>
    <variation>Y</variation>
    <location>
        <position position="44"/>
    </location>
</feature>
<feature type="sequence variant" id="VAR_071799" description="In SCN6; dbSNP:rs587777730." evidence="2">
    <original>Q</original>
    <variation>R</variation>
    <location>
        <position position="162"/>
    </location>
</feature>
<feature type="sequence conflict" description="In Ref. 1; BAC11188." evidence="3" ref="1">
    <original>A</original>
    <variation>T</variation>
    <location>
        <position position="9"/>
    </location>
</feature>
<feature type="sequence conflict" description="In Ref. 1; BAB55163." evidence="3" ref="1">
    <original>G</original>
    <variation>E</variation>
    <location>
        <position position="58"/>
    </location>
</feature>
<feature type="sequence conflict" description="In Ref. 1; BAB55163." evidence="3" ref="1">
    <original>R</original>
    <variation>G</variation>
    <location>
        <position position="61"/>
    </location>
</feature>
<feature type="sequence conflict" description="In Ref. 1; BAB55163." evidence="3" ref="1">
    <original>Y</original>
    <variation>H</variation>
    <location>
        <position position="149"/>
    </location>
</feature>
<feature type="helix" evidence="6">
    <location>
        <begin position="19"/>
        <end position="59"/>
    </location>
</feature>
<feature type="turn" evidence="6">
    <location>
        <begin position="65"/>
        <end position="67"/>
    </location>
</feature>
<feature type="helix" evidence="6">
    <location>
        <begin position="75"/>
        <end position="78"/>
    </location>
</feature>
<feature type="helix" evidence="6">
    <location>
        <begin position="79"/>
        <end position="81"/>
    </location>
</feature>
<feature type="helix" evidence="6">
    <location>
        <begin position="82"/>
        <end position="91"/>
    </location>
</feature>
<feature type="turn" evidence="6">
    <location>
        <begin position="92"/>
        <end position="95"/>
    </location>
</feature>
<feature type="helix" evidence="6">
    <location>
        <begin position="97"/>
        <end position="110"/>
    </location>
</feature>
<feature type="helix" evidence="6">
    <location>
        <begin position="113"/>
        <end position="121"/>
    </location>
</feature>
<feature type="helix" evidence="6">
    <location>
        <begin position="123"/>
        <end position="132"/>
    </location>
</feature>
<feature type="helix" evidence="6">
    <location>
        <begin position="144"/>
        <end position="183"/>
    </location>
</feature>
<organism>
    <name type="scientific">Homo sapiens</name>
    <name type="common">Human</name>
    <dbReference type="NCBI Taxonomy" id="9606"/>
    <lineage>
        <taxon>Eukaryota</taxon>
        <taxon>Metazoa</taxon>
        <taxon>Chordata</taxon>
        <taxon>Craniata</taxon>
        <taxon>Vertebrata</taxon>
        <taxon>Euteleostomi</taxon>
        <taxon>Mammalia</taxon>
        <taxon>Eutheria</taxon>
        <taxon>Euarchontoglires</taxon>
        <taxon>Primates</taxon>
        <taxon>Haplorrhini</taxon>
        <taxon>Catarrhini</taxon>
        <taxon>Hominidae</taxon>
        <taxon>Homo</taxon>
    </lineage>
</organism>
<keyword id="KW-0002">3D-structure</keyword>
<keyword id="KW-0225">Disease variant</keyword>
<keyword id="KW-0256">Endoplasmic reticulum</keyword>
<keyword id="KW-0391">Immunity</keyword>
<keyword id="KW-0472">Membrane</keyword>
<keyword id="KW-0597">Phosphoprotein</keyword>
<keyword id="KW-0653">Protein transport</keyword>
<keyword id="KW-1267">Proteomics identification</keyword>
<keyword id="KW-1185">Reference proteome</keyword>
<keyword id="KW-0812">Transmembrane</keyword>
<keyword id="KW-1133">Transmembrane helix</keyword>
<keyword id="KW-0813">Transport</keyword>
<proteinExistence type="evidence at protein level"/>
<protein>
    <recommendedName>
        <fullName evidence="3">Protein jagunal homolog 1</fullName>
    </recommendedName>
</protein>
<accession>Q8N5M9</accession>
<accession>Q8NCF6</accession>
<accession>Q96SW1</accession>
<name>JAGN1_HUMAN</name>
<gene>
    <name evidence="4" type="primary">JAGN1</name>
</gene>
<dbReference type="EMBL" id="AK027508">
    <property type="protein sequence ID" value="BAB55163.1"/>
    <property type="molecule type" value="mRNA"/>
</dbReference>
<dbReference type="EMBL" id="AK074760">
    <property type="protein sequence ID" value="BAC11188.1"/>
    <property type="molecule type" value="mRNA"/>
</dbReference>
<dbReference type="EMBL" id="CH471055">
    <property type="protein sequence ID" value="EAW64015.1"/>
    <property type="molecule type" value="Genomic_DNA"/>
</dbReference>
<dbReference type="EMBL" id="BC032101">
    <property type="protein sequence ID" value="AAH32101.1"/>
    <property type="molecule type" value="mRNA"/>
</dbReference>
<dbReference type="CCDS" id="CCDS2588.1"/>
<dbReference type="RefSeq" id="NP_115881.3">
    <property type="nucleotide sequence ID" value="NM_032492.3"/>
</dbReference>
<dbReference type="PDB" id="6WVD">
    <property type="method" value="X-ray"/>
    <property type="resolution" value="2.25 A"/>
    <property type="chains" value="A=2-183"/>
</dbReference>
<dbReference type="PDBsum" id="6WVD"/>
<dbReference type="SMR" id="Q8N5M9"/>
<dbReference type="BioGRID" id="124115">
    <property type="interactions" value="162"/>
</dbReference>
<dbReference type="FunCoup" id="Q8N5M9">
    <property type="interactions" value="1540"/>
</dbReference>
<dbReference type="IntAct" id="Q8N5M9">
    <property type="interactions" value="131"/>
</dbReference>
<dbReference type="STRING" id="9606.ENSP00000496942"/>
<dbReference type="GlyGen" id="Q8N5M9">
    <property type="glycosylation" value="1 site, 1 O-linked glycan (1 site)"/>
</dbReference>
<dbReference type="iPTMnet" id="Q8N5M9"/>
<dbReference type="PhosphoSitePlus" id="Q8N5M9"/>
<dbReference type="BioMuta" id="JAGN1"/>
<dbReference type="DMDM" id="74729022"/>
<dbReference type="jPOST" id="Q8N5M9"/>
<dbReference type="MassIVE" id="Q8N5M9"/>
<dbReference type="PaxDb" id="9606-ENSP00000306106"/>
<dbReference type="PeptideAtlas" id="Q8N5M9"/>
<dbReference type="ProteomicsDB" id="72076"/>
<dbReference type="Pumba" id="Q8N5M9"/>
<dbReference type="TopDownProteomics" id="Q8N5M9"/>
<dbReference type="Antibodypedia" id="59146">
    <property type="antibodies" value="56 antibodies from 15 providers"/>
</dbReference>
<dbReference type="DNASU" id="84522"/>
<dbReference type="Ensembl" id="ENST00000647897.1">
    <property type="protein sequence ID" value="ENSP00000496942.1"/>
    <property type="gene ID" value="ENSG00000171135.15"/>
</dbReference>
<dbReference type="GeneID" id="84522"/>
<dbReference type="KEGG" id="hsa:84522"/>
<dbReference type="MANE-Select" id="ENST00000647897.1">
    <property type="protein sequence ID" value="ENSP00000496942.1"/>
    <property type="RefSeq nucleotide sequence ID" value="NM_032492.4"/>
    <property type="RefSeq protein sequence ID" value="NP_115881.3"/>
</dbReference>
<dbReference type="UCSC" id="uc003btt.5">
    <property type="organism name" value="human"/>
</dbReference>
<dbReference type="AGR" id="HGNC:26926"/>
<dbReference type="CTD" id="84522"/>
<dbReference type="DisGeNET" id="84522"/>
<dbReference type="GeneCards" id="JAGN1"/>
<dbReference type="HGNC" id="HGNC:26926">
    <property type="gene designation" value="JAGN1"/>
</dbReference>
<dbReference type="HPA" id="ENSG00000171135">
    <property type="expression patterns" value="Low tissue specificity"/>
</dbReference>
<dbReference type="MalaCards" id="JAGN1"/>
<dbReference type="MIM" id="616012">
    <property type="type" value="gene"/>
</dbReference>
<dbReference type="MIM" id="616022">
    <property type="type" value="phenotype"/>
</dbReference>
<dbReference type="neXtProt" id="NX_Q8N5M9"/>
<dbReference type="OpenTargets" id="ENSG00000171135"/>
<dbReference type="Orphanet" id="423384">
    <property type="disease" value="Severe congenital neutropenia due to JAGN1 deficiency"/>
</dbReference>
<dbReference type="PharmGKB" id="PA134954931"/>
<dbReference type="VEuPathDB" id="HostDB:ENSG00000171135"/>
<dbReference type="eggNOG" id="KOG4054">
    <property type="taxonomic scope" value="Eukaryota"/>
</dbReference>
<dbReference type="GeneTree" id="ENSGT00390000005596"/>
<dbReference type="HOGENOM" id="CLU_121621_0_0_1"/>
<dbReference type="InParanoid" id="Q8N5M9"/>
<dbReference type="OMA" id="PYGVLWY"/>
<dbReference type="OrthoDB" id="8914197at2759"/>
<dbReference type="PAN-GO" id="Q8N5M9">
    <property type="GO annotations" value="4 GO annotations based on evolutionary models"/>
</dbReference>
<dbReference type="PhylomeDB" id="Q8N5M9"/>
<dbReference type="TreeFam" id="TF313137"/>
<dbReference type="PathwayCommons" id="Q8N5M9"/>
<dbReference type="SignaLink" id="Q8N5M9"/>
<dbReference type="BioGRID-ORCS" id="84522">
    <property type="hits" value="15 hits in 1156 CRISPR screens"/>
</dbReference>
<dbReference type="GenomeRNAi" id="84522"/>
<dbReference type="Pharos" id="Q8N5M9">
    <property type="development level" value="Tbio"/>
</dbReference>
<dbReference type="PRO" id="PR:Q8N5M9"/>
<dbReference type="Proteomes" id="UP000005640">
    <property type="component" value="Chromosome 3"/>
</dbReference>
<dbReference type="RNAct" id="Q8N5M9">
    <property type="molecule type" value="protein"/>
</dbReference>
<dbReference type="Bgee" id="ENSG00000171135">
    <property type="expression patterns" value="Expressed in ileal mucosa and 185 other cell types or tissues"/>
</dbReference>
<dbReference type="ExpressionAtlas" id="Q8N5M9">
    <property type="expression patterns" value="baseline and differential"/>
</dbReference>
<dbReference type="GO" id="GO:0005783">
    <property type="term" value="C:endoplasmic reticulum"/>
    <property type="evidence" value="ECO:0000314"/>
    <property type="project" value="UniProtKB"/>
</dbReference>
<dbReference type="GO" id="GO:0005789">
    <property type="term" value="C:endoplasmic reticulum membrane"/>
    <property type="evidence" value="ECO:0000318"/>
    <property type="project" value="GO_Central"/>
</dbReference>
<dbReference type="GO" id="GO:0050832">
    <property type="term" value="P:defense response to fungus"/>
    <property type="evidence" value="ECO:0007669"/>
    <property type="project" value="Ensembl"/>
</dbReference>
<dbReference type="GO" id="GO:0007029">
    <property type="term" value="P:endoplasmic reticulum organization"/>
    <property type="evidence" value="ECO:0000318"/>
    <property type="project" value="GO_Central"/>
</dbReference>
<dbReference type="GO" id="GO:0006887">
    <property type="term" value="P:exocytosis"/>
    <property type="evidence" value="ECO:0000304"/>
    <property type="project" value="UniProtKB"/>
</dbReference>
<dbReference type="GO" id="GO:0038158">
    <property type="term" value="P:granulocyte colony-stimulating factor signaling pathway"/>
    <property type="evidence" value="ECO:0000315"/>
    <property type="project" value="UniProtKB"/>
</dbReference>
<dbReference type="GO" id="GO:1901142">
    <property type="term" value="P:insulin metabolic process"/>
    <property type="evidence" value="ECO:0007669"/>
    <property type="project" value="Ensembl"/>
</dbReference>
<dbReference type="GO" id="GO:0030073">
    <property type="term" value="P:insulin secretion"/>
    <property type="evidence" value="ECO:0007669"/>
    <property type="project" value="Ensembl"/>
</dbReference>
<dbReference type="GO" id="GO:0061179">
    <property type="term" value="P:negative regulation of insulin secretion involved in cellular response to glucose stimulus"/>
    <property type="evidence" value="ECO:0007669"/>
    <property type="project" value="Ensembl"/>
</dbReference>
<dbReference type="GO" id="GO:0030223">
    <property type="term" value="P:neutrophil differentiation"/>
    <property type="evidence" value="ECO:0000315"/>
    <property type="project" value="UniProtKB"/>
</dbReference>
<dbReference type="GO" id="GO:0002446">
    <property type="term" value="P:neutrophil mediated immunity"/>
    <property type="evidence" value="ECO:0007669"/>
    <property type="project" value="Ensembl"/>
</dbReference>
<dbReference type="GO" id="GO:1990266">
    <property type="term" value="P:neutrophil migration"/>
    <property type="evidence" value="ECO:0007669"/>
    <property type="project" value="Ensembl"/>
</dbReference>
<dbReference type="GO" id="GO:0034976">
    <property type="term" value="P:response to endoplasmic reticulum stress"/>
    <property type="evidence" value="ECO:0007669"/>
    <property type="project" value="Ensembl"/>
</dbReference>
<dbReference type="GO" id="GO:0009749">
    <property type="term" value="P:response to glucose"/>
    <property type="evidence" value="ECO:0007669"/>
    <property type="project" value="Ensembl"/>
</dbReference>
<dbReference type="GO" id="GO:0016192">
    <property type="term" value="P:vesicle-mediated transport"/>
    <property type="evidence" value="ECO:0000315"/>
    <property type="project" value="UniProtKB"/>
</dbReference>
<dbReference type="InterPro" id="IPR009787">
    <property type="entry name" value="Jagunal"/>
</dbReference>
<dbReference type="PANTHER" id="PTHR20955">
    <property type="entry name" value="PROTEIN JAGUNAL HOMOLOG 1"/>
    <property type="match status" value="1"/>
</dbReference>
<dbReference type="PANTHER" id="PTHR20955:SF1">
    <property type="entry name" value="PROTEIN JAGUNAL HOMOLOG 1"/>
    <property type="match status" value="1"/>
</dbReference>
<dbReference type="Pfam" id="PF07086">
    <property type="entry name" value="Jagunal"/>
    <property type="match status" value="1"/>
</dbReference>
<sequence length="183" mass="21125">MASRAGPRAAGTDGSDFQHRERVAMHYQMSVTLKYEIKKLIYVHLVIWLLLVAKMSVGHLRLLSHDQVAMPYQWEYPYLLSILPSLLGLLSFPRNNISYLVLSMISMGLFSIAPLIYGSMEMFPAAQQLYRHGKAYRFLFGFSAVSIMYLVLVLAVQVHAWQLYYSKKLLDSWFTSTQEKKHK</sequence>
<reference key="1">
    <citation type="journal article" date="2004" name="Nat. Genet.">
        <title>Complete sequencing and characterization of 21,243 full-length human cDNAs.</title>
        <authorList>
            <person name="Ota T."/>
            <person name="Suzuki Y."/>
            <person name="Nishikawa T."/>
            <person name="Otsuki T."/>
            <person name="Sugiyama T."/>
            <person name="Irie R."/>
            <person name="Wakamatsu A."/>
            <person name="Hayashi K."/>
            <person name="Sato H."/>
            <person name="Nagai K."/>
            <person name="Kimura K."/>
            <person name="Makita H."/>
            <person name="Sekine M."/>
            <person name="Obayashi M."/>
            <person name="Nishi T."/>
            <person name="Shibahara T."/>
            <person name="Tanaka T."/>
            <person name="Ishii S."/>
            <person name="Yamamoto J."/>
            <person name="Saito K."/>
            <person name="Kawai Y."/>
            <person name="Isono Y."/>
            <person name="Nakamura Y."/>
            <person name="Nagahari K."/>
            <person name="Murakami K."/>
            <person name="Yasuda T."/>
            <person name="Iwayanagi T."/>
            <person name="Wagatsuma M."/>
            <person name="Shiratori A."/>
            <person name="Sudo H."/>
            <person name="Hosoiri T."/>
            <person name="Kaku Y."/>
            <person name="Kodaira H."/>
            <person name="Kondo H."/>
            <person name="Sugawara M."/>
            <person name="Takahashi M."/>
            <person name="Kanda K."/>
            <person name="Yokoi T."/>
            <person name="Furuya T."/>
            <person name="Kikkawa E."/>
            <person name="Omura Y."/>
            <person name="Abe K."/>
            <person name="Kamihara K."/>
            <person name="Katsuta N."/>
            <person name="Sato K."/>
            <person name="Tanikawa M."/>
            <person name="Yamazaki M."/>
            <person name="Ninomiya K."/>
            <person name="Ishibashi T."/>
            <person name="Yamashita H."/>
            <person name="Murakawa K."/>
            <person name="Fujimori K."/>
            <person name="Tanai H."/>
            <person name="Kimata M."/>
            <person name="Watanabe M."/>
            <person name="Hiraoka S."/>
            <person name="Chiba Y."/>
            <person name="Ishida S."/>
            <person name="Ono Y."/>
            <person name="Takiguchi S."/>
            <person name="Watanabe S."/>
            <person name="Yosida M."/>
            <person name="Hotuta T."/>
            <person name="Kusano J."/>
            <person name="Kanehori K."/>
            <person name="Takahashi-Fujii A."/>
            <person name="Hara H."/>
            <person name="Tanase T.-O."/>
            <person name="Nomura Y."/>
            <person name="Togiya S."/>
            <person name="Komai F."/>
            <person name="Hara R."/>
            <person name="Takeuchi K."/>
            <person name="Arita M."/>
            <person name="Imose N."/>
            <person name="Musashino K."/>
            <person name="Yuuki H."/>
            <person name="Oshima A."/>
            <person name="Sasaki N."/>
            <person name="Aotsuka S."/>
            <person name="Yoshikawa Y."/>
            <person name="Matsunawa H."/>
            <person name="Ichihara T."/>
            <person name="Shiohata N."/>
            <person name="Sano S."/>
            <person name="Moriya S."/>
            <person name="Momiyama H."/>
            <person name="Satoh N."/>
            <person name="Takami S."/>
            <person name="Terashima Y."/>
            <person name="Suzuki O."/>
            <person name="Nakagawa S."/>
            <person name="Senoh A."/>
            <person name="Mizoguchi H."/>
            <person name="Goto Y."/>
            <person name="Shimizu F."/>
            <person name="Wakebe H."/>
            <person name="Hishigaki H."/>
            <person name="Watanabe T."/>
            <person name="Sugiyama A."/>
            <person name="Takemoto M."/>
            <person name="Kawakami B."/>
            <person name="Yamazaki M."/>
            <person name="Watanabe K."/>
            <person name="Kumagai A."/>
            <person name="Itakura S."/>
            <person name="Fukuzumi Y."/>
            <person name="Fujimori Y."/>
            <person name="Komiyama M."/>
            <person name="Tashiro H."/>
            <person name="Tanigami A."/>
            <person name="Fujiwara T."/>
            <person name="Ono T."/>
            <person name="Yamada K."/>
            <person name="Fujii Y."/>
            <person name="Ozaki K."/>
            <person name="Hirao M."/>
            <person name="Ohmori Y."/>
            <person name="Kawabata A."/>
            <person name="Hikiji T."/>
            <person name="Kobatake N."/>
            <person name="Inagaki H."/>
            <person name="Ikema Y."/>
            <person name="Okamoto S."/>
            <person name="Okitani R."/>
            <person name="Kawakami T."/>
            <person name="Noguchi S."/>
            <person name="Itoh T."/>
            <person name="Shigeta K."/>
            <person name="Senba T."/>
            <person name="Matsumura K."/>
            <person name="Nakajima Y."/>
            <person name="Mizuno T."/>
            <person name="Morinaga M."/>
            <person name="Sasaki M."/>
            <person name="Togashi T."/>
            <person name="Oyama M."/>
            <person name="Hata H."/>
            <person name="Watanabe M."/>
            <person name="Komatsu T."/>
            <person name="Mizushima-Sugano J."/>
            <person name="Satoh T."/>
            <person name="Shirai Y."/>
            <person name="Takahashi Y."/>
            <person name="Nakagawa K."/>
            <person name="Okumura K."/>
            <person name="Nagase T."/>
            <person name="Nomura N."/>
            <person name="Kikuchi H."/>
            <person name="Masuho Y."/>
            <person name="Yamashita R."/>
            <person name="Nakai K."/>
            <person name="Yada T."/>
            <person name="Nakamura Y."/>
            <person name="Ohara O."/>
            <person name="Isogai T."/>
            <person name="Sugano S."/>
        </authorList>
    </citation>
    <scope>NUCLEOTIDE SEQUENCE [LARGE SCALE MRNA]</scope>
</reference>
<reference key="2">
    <citation type="submission" date="2005-07" db="EMBL/GenBank/DDBJ databases">
        <authorList>
            <person name="Mural R.J."/>
            <person name="Istrail S."/>
            <person name="Sutton G.G."/>
            <person name="Florea L."/>
            <person name="Halpern A.L."/>
            <person name="Mobarry C.M."/>
            <person name="Lippert R."/>
            <person name="Walenz B."/>
            <person name="Shatkay H."/>
            <person name="Dew I."/>
            <person name="Miller J.R."/>
            <person name="Flanigan M.J."/>
            <person name="Edwards N.J."/>
            <person name="Bolanos R."/>
            <person name="Fasulo D."/>
            <person name="Halldorsson B.V."/>
            <person name="Hannenhalli S."/>
            <person name="Turner R."/>
            <person name="Yooseph S."/>
            <person name="Lu F."/>
            <person name="Nusskern D.R."/>
            <person name="Shue B.C."/>
            <person name="Zheng X.H."/>
            <person name="Zhong F."/>
            <person name="Delcher A.L."/>
            <person name="Huson D.H."/>
            <person name="Kravitz S.A."/>
            <person name="Mouchard L."/>
            <person name="Reinert K."/>
            <person name="Remington K.A."/>
            <person name="Clark A.G."/>
            <person name="Waterman M.S."/>
            <person name="Eichler E.E."/>
            <person name="Adams M.D."/>
            <person name="Hunkapiller M.W."/>
            <person name="Myers E.W."/>
            <person name="Venter J.C."/>
        </authorList>
    </citation>
    <scope>NUCLEOTIDE SEQUENCE [LARGE SCALE GENOMIC DNA]</scope>
</reference>
<reference key="3">
    <citation type="journal article" date="2004" name="Genome Res.">
        <title>The status, quality, and expansion of the NIH full-length cDNA project: the Mammalian Gene Collection (MGC).</title>
        <authorList>
            <consortium name="The MGC Project Team"/>
        </authorList>
    </citation>
    <scope>NUCLEOTIDE SEQUENCE [LARGE SCALE MRNA]</scope>
    <source>
        <tissue>Uterus</tissue>
    </source>
</reference>
<reference key="4">
    <citation type="journal article" date="2007" name="J. Cell Biol.">
        <title>Jagunal is required for reorganizing the endoplasmic reticulum during Drosophila oogenesis.</title>
        <authorList>
            <person name="Lee S."/>
            <person name="Cooley L."/>
        </authorList>
    </citation>
    <scope>IDENTIFICATION</scope>
</reference>
<reference key="5">
    <citation type="journal article" date="2010" name="Sci. Signal.">
        <title>Quantitative phosphoproteomics reveals widespread full phosphorylation site occupancy during mitosis.</title>
        <authorList>
            <person name="Olsen J.V."/>
            <person name="Vermeulen M."/>
            <person name="Santamaria A."/>
            <person name="Kumar C."/>
            <person name="Miller M.L."/>
            <person name="Jensen L.J."/>
            <person name="Gnad F."/>
            <person name="Cox J."/>
            <person name="Jensen T.S."/>
            <person name="Nigg E.A."/>
            <person name="Brunak S."/>
            <person name="Mann M."/>
        </authorList>
    </citation>
    <scope>PHOSPHORYLATION [LARGE SCALE ANALYSIS] AT SER-3</scope>
    <scope>IDENTIFICATION BY MASS SPECTROMETRY [LARGE SCALE ANALYSIS]</scope>
    <source>
        <tissue>Cervix carcinoma</tissue>
    </source>
</reference>
<reference key="6">
    <citation type="journal article" date="2011" name="BMC Syst. Biol.">
        <title>Initial characterization of the human central proteome.</title>
        <authorList>
            <person name="Burkard T.R."/>
            <person name="Planyavsky M."/>
            <person name="Kaupe I."/>
            <person name="Breitwieser F.P."/>
            <person name="Buerckstuemmer T."/>
            <person name="Bennett K.L."/>
            <person name="Superti-Furga G."/>
            <person name="Colinge J."/>
        </authorList>
    </citation>
    <scope>IDENTIFICATION BY MASS SPECTROMETRY [LARGE SCALE ANALYSIS]</scope>
</reference>
<reference key="7">
    <citation type="journal article" date="2014" name="Nat. Genet.">
        <title>JAGN1 deficiency causes aberrant myeloid cell homeostasis and congenital neutropenia.</title>
        <authorList>
            <person name="Boztug K."/>
            <person name="Jaervinen P.M."/>
            <person name="Salzer E."/>
            <person name="Racek T."/>
            <person name="Moench S."/>
            <person name="Garncarz W."/>
            <person name="Gertz E.M."/>
            <person name="Schaeffer A.A."/>
            <person name="Antonopoulos A."/>
            <person name="Haslam S.M."/>
            <person name="Schieck L."/>
            <person name="Puchalka J."/>
            <person name="Diestelhorst J."/>
            <person name="Appaswamy G."/>
            <person name="Lescoeur B."/>
            <person name="Giambruno R."/>
            <person name="Bigenzahn J.W."/>
            <person name="Elling U."/>
            <person name="Pfeifer D."/>
            <person name="Conde C.D."/>
            <person name="Albert M.H."/>
            <person name="Welte K."/>
            <person name="Brandes G."/>
            <person name="Sherkat R."/>
            <person name="van der Werff Ten Bosch J."/>
            <person name="Rezaei N."/>
            <person name="Etzioni A."/>
            <person name="Bellanne-Chantelot C."/>
            <person name="Superti-Furga G."/>
            <person name="Penninger J.M."/>
            <person name="Bennett K.L."/>
            <person name="von Blume J."/>
            <person name="Dell A."/>
            <person name="Donadieu J."/>
            <person name="Klein C."/>
        </authorList>
    </citation>
    <scope>FUNCTION</scope>
    <scope>SUBCELLULAR LOCATION</scope>
    <scope>TISSUE SPECIFICITY</scope>
    <scope>INTERACTION WITH COPA; COPB2 AND COPG2</scope>
    <scope>INVOLVEMENT IN SCN6</scope>
    <scope>VARIANTS SCN6 SER-14; GLN-20; ASP-21; TYR-44 AND ARG-162</scope>
</reference>
<evidence type="ECO:0000255" key="1"/>
<evidence type="ECO:0000269" key="2">
    <source>
    </source>
</evidence>
<evidence type="ECO:0000305" key="3"/>
<evidence type="ECO:0000312" key="4">
    <source>
        <dbReference type="HGNC" id="HGNC:26926"/>
    </source>
</evidence>
<evidence type="ECO:0007744" key="5">
    <source>
    </source>
</evidence>
<evidence type="ECO:0007829" key="6">
    <source>
        <dbReference type="PDB" id="6WVD"/>
    </source>
</evidence>
<comment type="function">
    <text evidence="2 3">Endoplasmic reticulum transmembrane protein involved in vesicle-mediated transport, which is required for neutrophil function. Required for vesicle-mediated transport; it is however unclear whether it is involved in early secretory pathway or intracellular protein transport. Acts as a regulator of neutrophil function, probably via its role in vesicle-mediated transport: required for defense against fungal pathogens and for granulocyte colony-stimulating factor (GM-CSF) signaling pathway; possibly by regulating glycosylation and/or targeting of proteins contributing to the viability and migration of neutrophils.</text>
</comment>
<comment type="subunit">
    <text evidence="2">Interacts with COPA, COPB2 and COPG2.</text>
</comment>
<comment type="interaction">
    <interactant intactId="EBI-10266796">
        <id>Q8N5M9</id>
    </interactant>
    <interactant intactId="EBI-1754287">
        <id>Q9NRZ5</id>
        <label>AGPAT4</label>
    </interactant>
    <organismsDiffer>false</organismsDiffer>
    <experiments>3</experiments>
</comment>
<comment type="interaction">
    <interactant intactId="EBI-10266796">
        <id>Q8N5M9</id>
    </interactant>
    <interactant intactId="EBI-13059134">
        <id>Q13520</id>
        <label>AQP6</label>
    </interactant>
    <organismsDiffer>false</organismsDiffer>
    <experiments>3</experiments>
</comment>
<comment type="interaction">
    <interactant intactId="EBI-10266796">
        <id>Q8N5M9</id>
    </interactant>
    <interactant intactId="EBI-11343438">
        <id>Q3SXY8</id>
        <label>ARL13B</label>
    </interactant>
    <organismsDiffer>false</organismsDiffer>
    <experiments>3</experiments>
</comment>
<comment type="interaction">
    <interactant intactId="EBI-10266796">
        <id>Q8N5M9</id>
    </interactant>
    <interactant intactId="EBI-747430">
        <id>Q9BXK5</id>
        <label>BCL2L13</label>
    </interactant>
    <organismsDiffer>false</organismsDiffer>
    <experiments>3</experiments>
</comment>
<comment type="interaction">
    <interactant intactId="EBI-10266796">
        <id>Q8N5M9</id>
    </interactant>
    <interactant intactId="EBI-749204">
        <id>O15155</id>
        <label>BET1</label>
    </interactant>
    <organismsDiffer>false</organismsDiffer>
    <experiments>3</experiments>
</comment>
<comment type="interaction">
    <interactant intactId="EBI-10266796">
        <id>Q8N5M9</id>
    </interactant>
    <interactant intactId="EBI-3922513">
        <id>O95393</id>
        <label>BMP10</label>
    </interactant>
    <organismsDiffer>false</organismsDiffer>
    <experiments>3</experiments>
</comment>
<comment type="interaction">
    <interactant intactId="EBI-10266796">
        <id>Q8N5M9</id>
    </interactant>
    <interactant intactId="EBI-4402847">
        <id>Q12981</id>
        <label>BNIP1</label>
    </interactant>
    <organismsDiffer>false</organismsDiffer>
    <experiments>3</experiments>
</comment>
<comment type="interaction">
    <interactant intactId="EBI-10266796">
        <id>Q8N5M9</id>
    </interactant>
    <interactant intactId="EBI-749464">
        <id>Q12983</id>
        <label>BNIP3</label>
    </interactant>
    <organismsDiffer>false</organismsDiffer>
    <experiments>3</experiments>
</comment>
<comment type="interaction">
    <interactant intactId="EBI-10266796">
        <id>Q8N5M9</id>
    </interactant>
    <interactant intactId="EBI-7996695">
        <id>Q8WZ55</id>
        <label>BSND</label>
    </interactant>
    <organismsDiffer>false</organismsDiffer>
    <experiments>3</experiments>
</comment>
<comment type="interaction">
    <interactant intactId="EBI-10266796">
        <id>Q8N5M9</id>
    </interactant>
    <interactant intactId="EBI-17953245">
        <id>Q6UXG8-3</id>
        <label>BTNL9</label>
    </interactant>
    <organismsDiffer>false</organismsDiffer>
    <experiments>3</experiments>
</comment>
<comment type="interaction">
    <interactant intactId="EBI-10266796">
        <id>Q8N5M9</id>
    </interactant>
    <interactant intactId="EBI-12003442">
        <id>Q8WVX3-2</id>
        <label>C4orf3</label>
    </interactant>
    <organismsDiffer>false</organismsDiffer>
    <experiments>3</experiments>
</comment>
<comment type="interaction">
    <interactant intactId="EBI-10266796">
        <id>Q8N5M9</id>
    </interactant>
    <interactant intactId="EBI-19051471">
        <id>Q5R3K3</id>
        <label>CALHM6</label>
    </interactant>
    <organismsDiffer>false</organismsDiffer>
    <experiments>3</experiments>
</comment>
<comment type="interaction">
    <interactant intactId="EBI-10266796">
        <id>Q8N5M9</id>
    </interactant>
    <interactant intactId="EBI-10271156">
        <id>Q8NHW4</id>
        <label>CCL4L2</label>
    </interactant>
    <organismsDiffer>false</organismsDiffer>
    <experiments>3</experiments>
</comment>
<comment type="interaction">
    <interactant intactId="EBI-10266796">
        <id>Q8N5M9</id>
    </interactant>
    <interactant intactId="EBI-7797864">
        <id>P11912</id>
        <label>CD79A</label>
    </interactant>
    <organismsDiffer>false</organismsDiffer>
    <experiments>3</experiments>
</comment>
<comment type="interaction">
    <interactant intactId="EBI-10266796">
        <id>Q8N5M9</id>
    </interactant>
    <interactant intactId="EBI-358858">
        <id>O14735</id>
        <label>CDIPT</label>
    </interactant>
    <organismsDiffer>false</organismsDiffer>
    <experiments>3</experiments>
</comment>
<comment type="interaction">
    <interactant intactId="EBI-10266796">
        <id>Q8N5M9</id>
    </interactant>
    <interactant intactId="EBI-2622997">
        <id>Q9HA82</id>
        <label>CERS4</label>
    </interactant>
    <organismsDiffer>false</organismsDiffer>
    <experiments>3</experiments>
</comment>
<comment type="interaction">
    <interactant intactId="EBI-10266796">
        <id>Q8N5M9</id>
    </interactant>
    <interactant intactId="EBI-2130213">
        <id>Q99675</id>
        <label>CGRRF1</label>
    </interactant>
    <organismsDiffer>false</organismsDiffer>
    <experiments>3</experiments>
</comment>
<comment type="interaction">
    <interactant intactId="EBI-10266796">
        <id>Q8N5M9</id>
    </interactant>
    <interactant intactId="EBI-740744">
        <id>O95471</id>
        <label>CLDN7</label>
    </interactant>
    <organismsDiffer>false</organismsDiffer>
    <experiments>3</experiments>
</comment>
<comment type="interaction">
    <interactant intactId="EBI-10266796">
        <id>Q8N5M9</id>
    </interactant>
    <interactant intactId="EBI-12811991">
        <id>Q2HXU8-2</id>
        <label>CLEC12B</label>
    </interactant>
    <organismsDiffer>false</organismsDiffer>
    <experiments>3</experiments>
</comment>
<comment type="interaction">
    <interactant intactId="EBI-10266796">
        <id>Q8N5M9</id>
    </interactant>
    <interactant intactId="EBI-12703404">
        <id>Q8WXI8</id>
        <label>CLEC4D</label>
    </interactant>
    <organismsDiffer>false</organismsDiffer>
    <experiments>3</experiments>
</comment>
<comment type="interaction">
    <interactant intactId="EBI-10266796">
        <id>Q8N5M9</id>
    </interactant>
    <interactant intactId="EBI-3939278">
        <id>Q9BXN2</id>
        <label>CLEC7A</label>
    </interactant>
    <organismsDiffer>false</organismsDiffer>
    <experiments>3</experiments>
</comment>
<comment type="interaction">
    <interactant intactId="EBI-10266796">
        <id>Q8N5M9</id>
    </interactant>
    <interactant intactId="EBI-11522780">
        <id>Q96DZ9-2</id>
        <label>CMTM5</label>
    </interactant>
    <organismsDiffer>false</organismsDiffer>
    <experiments>3</experiments>
</comment>
<comment type="interaction">
    <interactant intactId="EBI-10266796">
        <id>Q8N5M9</id>
    </interactant>
    <interactant intactId="EBI-2834035">
        <id>Q5RI15</id>
        <label>COX20</label>
    </interactant>
    <organismsDiffer>false</organismsDiffer>
    <experiments>3</experiments>
</comment>
<comment type="interaction">
    <interactant intactId="EBI-10266796">
        <id>Q8N5M9</id>
    </interactant>
    <interactant intactId="EBI-6942903">
        <id>Q96BA8</id>
        <label>CREB3L1</label>
    </interactant>
    <organismsDiffer>false</organismsDiffer>
    <experiments>3</experiments>
</comment>
<comment type="interaction">
    <interactant intactId="EBI-10266796">
        <id>Q8N5M9</id>
    </interactant>
    <interactant intactId="EBI-2680384">
        <id>Q9BQA9</id>
        <label>CYBC1</label>
    </interactant>
    <organismsDiffer>false</organismsDiffer>
    <experiments>3</experiments>
</comment>
<comment type="interaction">
    <interactant intactId="EBI-10266796">
        <id>Q8N5M9</id>
    </interactant>
    <interactant intactId="EBI-1752413">
        <id>P78329</id>
        <label>CYP4F2</label>
    </interactant>
    <organismsDiffer>false</organismsDiffer>
    <experiments>3</experiments>
</comment>
<comment type="interaction">
    <interactant intactId="EBI-10266796">
        <id>Q8N5M9</id>
    </interactant>
    <interactant intactId="EBI-8639143">
        <id>Q96LL9</id>
        <label>DNAJC30</label>
    </interactant>
    <organismsDiffer>false</organismsDiffer>
    <experiments>3</experiments>
</comment>
<comment type="interaction">
    <interactant intactId="EBI-10266796">
        <id>Q8N5M9</id>
    </interactant>
    <interactant intactId="EBI-3915253">
        <id>Q15125</id>
        <label>EBP</label>
    </interactant>
    <organismsDiffer>false</organismsDiffer>
    <experiments>3</experiments>
</comment>
<comment type="interaction">
    <interactant intactId="EBI-10266796">
        <id>Q8N5M9</id>
    </interactant>
    <interactant intactId="EBI-526033">
        <id>Q9HAV5</id>
        <label>EDA2R</label>
    </interactant>
    <organismsDiffer>false</organismsDiffer>
    <experiments>3</experiments>
</comment>
<comment type="interaction">
    <interactant intactId="EBI-10266796">
        <id>Q8N5M9</id>
    </interactant>
    <interactant intactId="EBI-2339219">
        <id>Q08426</id>
        <label>EHHADH</label>
    </interactant>
    <organismsDiffer>false</organismsDiffer>
    <experiments>3</experiments>
</comment>
<comment type="interaction">
    <interactant intactId="EBI-10266796">
        <id>Q8N5M9</id>
    </interactant>
    <interactant intactId="EBI-18535450">
        <id>Q9GZR5</id>
        <label>ELOVL4</label>
    </interactant>
    <organismsDiffer>false</organismsDiffer>
    <experiments>3</experiments>
</comment>
<comment type="interaction">
    <interactant intactId="EBI-10266796">
        <id>Q8N5M9</id>
    </interactant>
    <interactant intactId="EBI-711490">
        <id>Q9UKR5</id>
        <label>ERG28</label>
    </interactant>
    <organismsDiffer>false</organismsDiffer>
    <experiments>3</experiments>
</comment>
<comment type="interaction">
    <interactant intactId="EBI-10266796">
        <id>Q8N5M9</id>
    </interactant>
    <interactant intactId="EBI-781551">
        <id>Q9Y282</id>
        <label>ERGIC3</label>
    </interactant>
    <organismsDiffer>false</organismsDiffer>
    <experiments>3</experiments>
</comment>
<comment type="interaction">
    <interactant intactId="EBI-10266796">
        <id>Q8N5M9</id>
    </interactant>
    <interactant intactId="EBI-742600">
        <id>Q9Y624</id>
        <label>F11R</label>
    </interactant>
    <organismsDiffer>false</organismsDiffer>
    <experiments>3</experiments>
</comment>
<comment type="interaction">
    <interactant intactId="EBI-10266796">
        <id>Q8N5M9</id>
    </interactant>
    <interactant intactId="EBI-12201693">
        <id>Q8N128-2</id>
        <label>FAM177A1</label>
    </interactant>
    <organismsDiffer>false</organismsDiffer>
    <experiments>3</experiments>
</comment>
<comment type="interaction">
    <interactant intactId="EBI-10266796">
        <id>Q8N5M9</id>
    </interactant>
    <interactant intactId="EBI-18304435">
        <id>Q5JX71</id>
        <label>FAM209A</label>
    </interactant>
    <organismsDiffer>false</organismsDiffer>
    <experiments>3</experiments>
</comment>
<comment type="interaction">
    <interactant intactId="EBI-10266796">
        <id>Q8N5M9</id>
    </interactant>
    <interactant intactId="EBI-2869867">
        <id>P12314</id>
        <label>FCGR1A</label>
    </interactant>
    <organismsDiffer>false</organismsDiffer>
    <experiments>3</experiments>
</comment>
<comment type="interaction">
    <interactant intactId="EBI-10266796">
        <id>Q8N5M9</id>
    </interactant>
    <interactant intactId="EBI-17263163">
        <id>Q96LA5-2</id>
        <label>FCRL2</label>
    </interactant>
    <organismsDiffer>false</organismsDiffer>
    <experiments>3</experiments>
</comment>
<comment type="interaction">
    <interactant intactId="EBI-10266796">
        <id>Q8N5M9</id>
    </interactant>
    <interactant intactId="EBI-4314687">
        <id>Q96PJ5</id>
        <label>FCRL4</label>
    </interactant>
    <organismsDiffer>false</organismsDiffer>
    <experiments>3</experiments>
</comment>
<comment type="interaction">
    <interactant intactId="EBI-10266796">
        <id>Q8N5M9</id>
    </interactant>
    <interactant intactId="EBI-714550">
        <id>P37268</id>
        <label>FDFT1</label>
    </interactant>
    <organismsDiffer>false</organismsDiffer>
    <experiments>3</experiments>
</comment>
<comment type="interaction">
    <interactant intactId="EBI-10266796">
        <id>Q8N5M9</id>
    </interactant>
    <interactant intactId="EBI-3385283">
        <id>Q9Y3D6</id>
        <label>FIS1</label>
    </interactant>
    <organismsDiffer>false</organismsDiffer>
    <experiments>3</experiments>
</comment>
<comment type="interaction">
    <interactant intactId="EBI-10266796">
        <id>Q8N5M9</id>
    </interactant>
    <interactant intactId="EBI-724839">
        <id>Q14318</id>
        <label>FKBP8</label>
    </interactant>
    <organismsDiffer>false</organismsDiffer>
    <experiments>3</experiments>
</comment>
<comment type="interaction">
    <interactant intactId="EBI-10266796">
        <id>Q8N5M9</id>
    </interactant>
    <interactant intactId="EBI-12142257">
        <id>Q8TBE3</id>
        <label>FNDC9</label>
    </interactant>
    <organismsDiffer>false</organismsDiffer>
    <experiments>3</experiments>
</comment>
<comment type="interaction">
    <interactant intactId="EBI-10266796">
        <id>Q8N5M9</id>
    </interactant>
    <interactant intactId="EBI-6911547">
        <id>A2A2Y4</id>
        <label>FRMD3</label>
    </interactant>
    <organismsDiffer>false</organismsDiffer>
    <experiments>3</experiments>
</comment>
<comment type="interaction">
    <interactant intactId="EBI-10266796">
        <id>Q8N5M9</id>
    </interactant>
    <interactant intactId="EBI-713304">
        <id>Q9H0Q3</id>
        <label>FXYD6</label>
    </interactant>
    <organismsDiffer>false</organismsDiffer>
    <experiments>3</experiments>
</comment>
<comment type="interaction">
    <interactant intactId="EBI-10266796">
        <id>Q8N5M9</id>
    </interactant>
    <interactant intactId="EBI-11991950">
        <id>Q8WWP7</id>
        <label>GIMAP1</label>
    </interactant>
    <organismsDiffer>false</organismsDiffer>
    <experiments>3</experiments>
</comment>
<comment type="interaction">
    <interactant intactId="EBI-10266796">
        <id>Q8N5M9</id>
    </interactant>
    <interactant intactId="EBI-6166686">
        <id>Q96F15</id>
        <label>GIMAP5</label>
    </interactant>
    <organismsDiffer>false</organismsDiffer>
    <experiments>3</experiments>
</comment>
<comment type="interaction">
    <interactant intactId="EBI-10266796">
        <id>Q8N5M9</id>
    </interactant>
    <interactant intactId="EBI-3909454">
        <id>O95377</id>
        <label>GJB5</label>
    </interactant>
    <organismsDiffer>false</organismsDiffer>
    <experiments>3</experiments>
</comment>
<comment type="interaction">
    <interactant intactId="EBI-10266796">
        <id>Q8N5M9</id>
    </interactant>
    <interactant intactId="EBI-712073">
        <id>Q8NBJ4</id>
        <label>GOLM1</label>
    </interactant>
    <organismsDiffer>false</organismsDiffer>
    <experiments>3</experiments>
</comment>
<comment type="interaction">
    <interactant intactId="EBI-10266796">
        <id>Q8N5M9</id>
    </interactant>
    <interactant intactId="EBI-4401517">
        <id>O14653</id>
        <label>GOSR2</label>
    </interactant>
    <organismsDiffer>false</organismsDiffer>
    <experiments>3</experiments>
</comment>
<comment type="interaction">
    <interactant intactId="EBI-10266796">
        <id>Q8N5M9</id>
    </interactant>
    <interactant intactId="EBI-17746146">
        <id>P55259-4</id>
        <label>GP2</label>
    </interactant>
    <organismsDiffer>false</organismsDiffer>
    <experiments>3</experiments>
</comment>
<comment type="interaction">
    <interactant intactId="EBI-10266796">
        <id>Q8N5M9</id>
    </interactant>
    <interactant intactId="EBI-13345167">
        <id>Q8TDT2</id>
        <label>GPR152</label>
    </interactant>
    <organismsDiffer>false</organismsDiffer>
    <experiments>3</experiments>
</comment>
<comment type="interaction">
    <interactant intactId="EBI-10266796">
        <id>Q8N5M9</id>
    </interactant>
    <interactant intactId="EBI-2927498">
        <id>O60883</id>
        <label>GPR37L1</label>
    </interactant>
    <organismsDiffer>false</organismsDiffer>
    <experiments>3</experiments>
</comment>
<comment type="interaction">
    <interactant intactId="EBI-10266796">
        <id>Q8N5M9</id>
    </interactant>
    <interactant intactId="EBI-2806151">
        <id>P09601</id>
        <label>HMOX1</label>
    </interactant>
    <organismsDiffer>false</organismsDiffer>
    <experiments>3</experiments>
</comment>
<comment type="interaction">
    <interactant intactId="EBI-10266796">
        <id>Q8N5M9</id>
    </interactant>
    <interactant intactId="EBI-18053395">
        <id>Q7Z5P4</id>
        <label>HSD17B13</label>
    </interactant>
    <organismsDiffer>false</organismsDiffer>
    <experiments>3</experiments>
</comment>
<comment type="interaction">
    <interactant intactId="EBI-10266796">
        <id>Q8N5M9</id>
    </interactant>
    <interactant intactId="EBI-12937691">
        <id>Q9BUP3-3</id>
        <label>HTATIP2</label>
    </interactant>
    <organismsDiffer>false</organismsDiffer>
    <experiments>3</experiments>
</comment>
<comment type="interaction">
    <interactant intactId="EBI-10266796">
        <id>Q8N5M9</id>
    </interactant>
    <interactant intactId="EBI-11721771">
        <id>O60725</id>
        <label>ICMT</label>
    </interactant>
    <organismsDiffer>false</organismsDiffer>
    <experiments>3</experiments>
</comment>
<comment type="interaction">
    <interactant intactId="EBI-10266796">
        <id>Q8N5M9</id>
    </interactant>
    <interactant intactId="EBI-725665">
        <id>Q9Y5U9</id>
        <label>IER3IP1</label>
    </interactant>
    <organismsDiffer>false</organismsDiffer>
    <experiments>3</experiments>
</comment>
<comment type="interaction">
    <interactant intactId="EBI-10266796">
        <id>Q8N5M9</id>
    </interactant>
    <interactant intactId="EBI-3905457">
        <id>P38484</id>
        <label>IFNGR2</label>
    </interactant>
    <organismsDiffer>false</organismsDiffer>
    <experiments>3</experiments>
</comment>
<comment type="interaction">
    <interactant intactId="EBI-10266796">
        <id>Q8N5M9</id>
    </interactant>
    <interactant intactId="EBI-1757512">
        <id>P26951</id>
        <label>IL3RA</label>
    </interactant>
    <organismsDiffer>false</organismsDiffer>
    <experiments>3</experiments>
</comment>
<comment type="interaction">
    <interactant intactId="EBI-10266796">
        <id>Q8N5M9</id>
    </interactant>
    <interactant intactId="EBI-749265">
        <id>Q8N6L0</id>
        <label>KASH5</label>
    </interactant>
    <organismsDiffer>false</organismsDiffer>
    <experiments>6</experiments>
</comment>
<comment type="interaction">
    <interactant intactId="EBI-10266796">
        <id>Q8N5M9</id>
    </interactant>
    <interactant intactId="EBI-8286599">
        <id>Q09470</id>
        <label>KCNA1</label>
    </interactant>
    <organismsDiffer>false</organismsDiffer>
    <experiments>5</experiments>
</comment>
<comment type="interaction">
    <interactant intactId="EBI-10266796">
        <id>Q8N5M9</id>
    </interactant>
    <interactant intactId="EBI-8632435">
        <id>P43628</id>
        <label>KIR2DL3</label>
    </interactant>
    <organismsDiffer>false</organismsDiffer>
    <experiments>3</experiments>
</comment>
<comment type="interaction">
    <interactant intactId="EBI-10266796">
        <id>Q8N5M9</id>
    </interactant>
    <interactant intactId="EBI-17272405">
        <id>Q8N743</id>
        <label>KIR3DL3</label>
    </interactant>
    <organismsDiffer>false</organismsDiffer>
    <experiments>3</experiments>
</comment>
<comment type="interaction">
    <interactant intactId="EBI-10266796">
        <id>Q8N5M9</id>
    </interactant>
    <interactant intactId="EBI-12268900">
        <id>Q68G75</id>
        <label>LEMD1</label>
    </interactant>
    <organismsDiffer>false</organismsDiffer>
    <experiments>3</experiments>
</comment>
<comment type="interaction">
    <interactant intactId="EBI-10266796">
        <id>Q8N5M9</id>
    </interactant>
    <interactant intactId="EBI-2820517">
        <id>Q8TAF8</id>
        <label>LHFPL5</label>
    </interactant>
    <organismsDiffer>false</organismsDiffer>
    <experiments>3</experiments>
</comment>
<comment type="interaction">
    <interactant intactId="EBI-10266796">
        <id>Q8N5M9</id>
    </interactant>
    <interactant intactId="EBI-12033434">
        <id>Q9UBY5</id>
        <label>LPAR3</label>
    </interactant>
    <organismsDiffer>false</organismsDiffer>
    <experiments>3</experiments>
</comment>
<comment type="interaction">
    <interactant intactId="EBI-10266796">
        <id>Q8N5M9</id>
    </interactant>
    <interactant intactId="EBI-11956541">
        <id>Q9GZY8-5</id>
        <label>MFF</label>
    </interactant>
    <organismsDiffer>false</organismsDiffer>
    <experiments>3</experiments>
</comment>
<comment type="interaction">
    <interactant intactId="EBI-10266796">
        <id>Q8N5M9</id>
    </interactant>
    <interactant intactId="EBI-1045440">
        <id>Q9HC36</id>
        <label>MRM3</label>
    </interactant>
    <organismsDiffer>false</organismsDiffer>
    <experiments>3</experiments>
</comment>
<comment type="interaction">
    <interactant intactId="EBI-10266796">
        <id>Q8N5M9</id>
    </interactant>
    <interactant intactId="EBI-3923617">
        <id>Q9H2K0</id>
        <label>MTIF3</label>
    </interactant>
    <organismsDiffer>false</organismsDiffer>
    <experiments>3</experiments>
</comment>
<comment type="interaction">
    <interactant intactId="EBI-10266796">
        <id>Q8N5M9</id>
    </interactant>
    <interactant intactId="EBI-10317425">
        <id>Q9NZG7</id>
        <label>NINJ2</label>
    </interactant>
    <organismsDiffer>false</organismsDiffer>
    <experiments>3</experiments>
</comment>
<comment type="interaction">
    <interactant intactId="EBI-10266796">
        <id>Q8N5M9</id>
    </interactant>
    <interactant intactId="EBI-12842334">
        <id>Q02297-10</id>
        <label>NRG1</label>
    </interactant>
    <organismsDiffer>false</organismsDiffer>
    <experiments>3</experiments>
</comment>
<comment type="interaction">
    <interactant intactId="EBI-10266796">
        <id>Q8N5M9</id>
    </interactant>
    <interactant intactId="EBI-6916492">
        <id>Q9NUU6</id>
        <label>OTULINL</label>
    </interactant>
    <organismsDiffer>false</organismsDiffer>
    <experiments>3</experiments>
</comment>
<comment type="interaction">
    <interactant intactId="EBI-10266796">
        <id>Q8N5M9</id>
    </interactant>
    <interactant intactId="EBI-716063">
        <id>Q13113</id>
        <label>PDZK1IP1</label>
    </interactant>
    <organismsDiffer>false</organismsDiffer>
    <experiments>3</experiments>
</comment>
<comment type="interaction">
    <interactant intactId="EBI-10266796">
        <id>Q8N5M9</id>
    </interactant>
    <interactant intactId="EBI-12188331">
        <id>P60201-2</id>
        <label>PLP1</label>
    </interactant>
    <organismsDiffer>false</organismsDiffer>
    <experiments>3</experiments>
</comment>
<comment type="interaction">
    <interactant intactId="EBI-10266796">
        <id>Q8N5M9</id>
    </interactant>
    <interactant intactId="EBI-722017">
        <id>O43688</id>
        <label>PLPP2</label>
    </interactant>
    <organismsDiffer>false</organismsDiffer>
    <experiments>3</experiments>
</comment>
<comment type="interaction">
    <interactant intactId="EBI-10266796">
        <id>Q8N5M9</id>
    </interactant>
    <interactant intactId="EBI-10192441">
        <id>Q86VR2</id>
        <label>RETREG3</label>
    </interactant>
    <organismsDiffer>false</organismsDiffer>
    <experiments>3</experiments>
</comment>
<comment type="interaction">
    <interactant intactId="EBI-10266796">
        <id>Q8N5M9</id>
    </interactant>
    <interactant intactId="EBI-10244780">
        <id>Q5QGT7</id>
        <label>RTP2</label>
    </interactant>
    <organismsDiffer>false</organismsDiffer>
    <experiments>3</experiments>
</comment>
<comment type="interaction">
    <interactant intactId="EBI-10266796">
        <id>Q8N5M9</id>
    </interactant>
    <interactant intactId="EBI-3917235">
        <id>Q9NTJ5</id>
        <label>SACM1L</label>
    </interactant>
    <organismsDiffer>false</organismsDiffer>
    <experiments>3</experiments>
</comment>
<comment type="interaction">
    <interactant intactId="EBI-10266796">
        <id>Q8N5M9</id>
    </interactant>
    <interactant intactId="EBI-3920694">
        <id>Q9NR31</id>
        <label>SAR1A</label>
    </interactant>
    <organismsDiffer>false</organismsDiffer>
    <experiments>3</experiments>
</comment>
<comment type="interaction">
    <interactant intactId="EBI-10266796">
        <id>Q8N5M9</id>
    </interactant>
    <interactant intactId="EBI-2684237">
        <id>O00767</id>
        <label>SCD</label>
    </interactant>
    <organismsDiffer>false</organismsDiffer>
    <experiments>3</experiments>
</comment>
<comment type="interaction">
    <interactant intactId="EBI-10266796">
        <id>Q8N5M9</id>
    </interactant>
    <interactant intactId="EBI-1058865">
        <id>O75396</id>
        <label>SEC22B</label>
    </interactant>
    <organismsDiffer>false</organismsDiffer>
    <experiments>3</experiments>
</comment>
<comment type="interaction">
    <interactant intactId="EBI-10266796">
        <id>Q8N5M9</id>
    </interactant>
    <interactant intactId="EBI-10329948">
        <id>Q9Y6X1</id>
        <label>SERP1</label>
    </interactant>
    <organismsDiffer>false</organismsDiffer>
    <experiments>3</experiments>
</comment>
<comment type="interaction">
    <interactant intactId="EBI-10266796">
        <id>Q8N5M9</id>
    </interactant>
    <interactant intactId="EBI-14058448">
        <id>Q96DU3</id>
        <label>SLAMF6</label>
    </interactant>
    <organismsDiffer>false</organismsDiffer>
    <experiments>3</experiments>
</comment>
<comment type="interaction">
    <interactant intactId="EBI-10266796">
        <id>Q8N5M9</id>
    </interactant>
    <interactant intactId="EBI-12811757">
        <id>O95436-2</id>
        <label>SLC34A2</label>
    </interactant>
    <organismsDiffer>false</organismsDiffer>
    <experiments>3</experiments>
</comment>
<comment type="interaction">
    <interactant intactId="EBI-10266796">
        <id>Q8N5M9</id>
    </interactant>
    <interactant intactId="EBI-10226799">
        <id>Q0VAQ4</id>
        <label>SMAGP</label>
    </interactant>
    <organismsDiffer>false</organismsDiffer>
    <experiments>3</experiments>
</comment>
<comment type="interaction">
    <interactant intactId="EBI-10266796">
        <id>Q8N5M9</id>
    </interactant>
    <interactant intactId="EBI-12188413">
        <id>B2RUZ4</id>
        <label>SMIM1</label>
    </interactant>
    <organismsDiffer>false</organismsDiffer>
    <experiments>3</experiments>
</comment>
<comment type="interaction">
    <interactant intactId="EBI-10266796">
        <id>Q8N5M9</id>
    </interactant>
    <interactant intactId="EBI-17657124">
        <id>Q96E16</id>
        <label>SMIM19</label>
    </interactant>
    <organismsDiffer>false</organismsDiffer>
    <experiments>3</experiments>
</comment>
<comment type="interaction">
    <interactant intactId="EBI-10266796">
        <id>Q8N5M9</id>
    </interactant>
    <interactant intactId="EBI-12900395">
        <id>Q8TAV4</id>
        <label>STOML3</label>
    </interactant>
    <organismsDiffer>false</organismsDiffer>
    <experiments>3</experiments>
</comment>
<comment type="interaction">
    <interactant intactId="EBI-10266796">
        <id>Q8N5M9</id>
    </interactant>
    <interactant intactId="EBI-712466">
        <id>Q16623</id>
        <label>STX1A</label>
    </interactant>
    <organismsDiffer>false</organismsDiffer>
    <experiments>3</experiments>
</comment>
<comment type="interaction">
    <interactant intactId="EBI-10266796">
        <id>Q8N5M9</id>
    </interactant>
    <interactant intactId="EBI-1394295">
        <id>Q13277</id>
        <label>STX3</label>
    </interactant>
    <organismsDiffer>false</organismsDiffer>
    <experiments>3</experiments>
</comment>
<comment type="interaction">
    <interactant intactId="EBI-10266796">
        <id>Q8N5M9</id>
    </interactant>
    <interactant intactId="EBI-714206">
        <id>Q13190</id>
        <label>STX5</label>
    </interactant>
    <organismsDiffer>false</organismsDiffer>
    <experiments>3</experiments>
</comment>
<comment type="interaction">
    <interactant intactId="EBI-10266796">
        <id>Q8N5M9</id>
    </interactant>
    <interactant intactId="EBI-3221827">
        <id>O15400</id>
        <label>STX7</label>
    </interactant>
    <organismsDiffer>false</organismsDiffer>
    <experiments>3</experiments>
</comment>
<comment type="interaction">
    <interactant intactId="EBI-10266796">
        <id>Q8N5M9</id>
    </interactant>
    <interactant intactId="EBI-727240">
        <id>Q9UNK0</id>
        <label>STX8</label>
    </interactant>
    <organismsDiffer>false</organismsDiffer>
    <experiments>3</experiments>
</comment>
<comment type="interaction">
    <interactant intactId="EBI-10266796">
        <id>Q8N5M9</id>
    </interactant>
    <interactant intactId="EBI-2877718">
        <id>Q9NZ01</id>
        <label>TECR</label>
    </interactant>
    <organismsDiffer>false</organismsDiffer>
    <experiments>3</experiments>
</comment>
<comment type="interaction">
    <interactant intactId="EBI-10266796">
        <id>Q8N5M9</id>
    </interactant>
    <interactant intactId="EBI-1047996">
        <id>O14925</id>
        <label>TIMM23</label>
    </interactant>
    <organismsDiffer>false</organismsDiffer>
    <experiments>3</experiments>
</comment>
<comment type="interaction">
    <interactant intactId="EBI-10266796">
        <id>Q8N5M9</id>
    </interactant>
    <interactant intactId="EBI-8644968">
        <id>Q9NV29</id>
        <label>TMEM100</label>
    </interactant>
    <organismsDiffer>false</organismsDiffer>
    <experiments>3</experiments>
</comment>
<comment type="interaction">
    <interactant intactId="EBI-10266796">
        <id>Q8N5M9</id>
    </interactant>
    <interactant intactId="EBI-2821497">
        <id>Q9BVX2</id>
        <label>TMEM106C</label>
    </interactant>
    <organismsDiffer>false</organismsDiffer>
    <experiments>3</experiments>
</comment>
<comment type="interaction">
    <interactant intactId="EBI-10266796">
        <id>Q8N5M9</id>
    </interactant>
    <interactant intactId="EBI-10171534">
        <id>A0PK00</id>
        <label>TMEM120B</label>
    </interactant>
    <organismsDiffer>false</organismsDiffer>
    <experiments>3</experiments>
</comment>
<comment type="interaction">
    <interactant intactId="EBI-10266796">
        <id>Q8N5M9</id>
    </interactant>
    <interactant intactId="EBI-10694905">
        <id>Q5BJH2-2</id>
        <label>TMEM128</label>
    </interactant>
    <organismsDiffer>false</organismsDiffer>
    <experiments>3</experiments>
</comment>
<comment type="interaction">
    <interactant intactId="EBI-10266796">
        <id>Q8N5M9</id>
    </interactant>
    <interactant intactId="EBI-8638294">
        <id>Q9NUH8</id>
        <label>TMEM14B</label>
    </interactant>
    <organismsDiffer>false</organismsDiffer>
    <experiments>3</experiments>
</comment>
<comment type="interaction">
    <interactant intactId="EBI-10266796">
        <id>Q8N5M9</id>
    </interactant>
    <interactant intactId="EBI-10265825">
        <id>Q8N511</id>
        <label>TMEM199</label>
    </interactant>
    <organismsDiffer>false</organismsDiffer>
    <experiments>3</experiments>
</comment>
<comment type="interaction">
    <interactant intactId="EBI-10266796">
        <id>Q8N5M9</id>
    </interactant>
    <interactant intactId="EBI-13301303">
        <id>Q6UWW9</id>
        <label>TMEM207</label>
    </interactant>
    <organismsDiffer>false</organismsDiffer>
    <experiments>3</experiments>
</comment>
<comment type="interaction">
    <interactant intactId="EBI-10266796">
        <id>Q8N5M9</id>
    </interactant>
    <interactant intactId="EBI-10982110">
        <id>Q96Q45-2</id>
        <label>TMEM237</label>
    </interactant>
    <organismsDiffer>false</organismsDiffer>
    <experiments>3</experiments>
</comment>
<comment type="interaction">
    <interactant intactId="EBI-10266796">
        <id>Q8N5M9</id>
    </interactant>
    <interactant intactId="EBI-10315004">
        <id>Q9NWH2</id>
        <label>TMEM242</label>
    </interactant>
    <organismsDiffer>false</organismsDiffer>
    <experiments>3</experiments>
</comment>
<comment type="interaction">
    <interactant intactId="EBI-10266796">
        <id>Q8N5M9</id>
    </interactant>
    <interactant intactId="EBI-12887458">
        <id>Q9BU79</id>
        <label>TMEM243</label>
    </interactant>
    <organismsDiffer>false</organismsDiffer>
    <experiments>3</experiments>
</comment>
<comment type="interaction">
    <interactant intactId="EBI-10266796">
        <id>Q8N5M9</id>
    </interactant>
    <interactant intactId="EBI-18178701">
        <id>Q4KMG9</id>
        <label>TMEM52B</label>
    </interactant>
    <organismsDiffer>false</organismsDiffer>
    <experiments>3</experiments>
</comment>
<comment type="interaction">
    <interactant intactId="EBI-10266796">
        <id>Q8N5M9</id>
    </interactant>
    <interactant intactId="EBI-6656213">
        <id>Q6PI78</id>
        <label>TMEM65</label>
    </interactant>
    <organismsDiffer>false</organismsDiffer>
    <experiments>3</experiments>
</comment>
<comment type="interaction">
    <interactant intactId="EBI-10266796">
        <id>Q8N5M9</id>
    </interactant>
    <interactant intactId="EBI-524131">
        <id>O43557</id>
        <label>TNFSF14</label>
    </interactant>
    <organismsDiffer>false</organismsDiffer>
    <experiments>3</experiments>
</comment>
<comment type="interaction">
    <interactant intactId="EBI-10266796">
        <id>Q8N5M9</id>
    </interactant>
    <interactant intactId="EBI-16746122">
        <id>Q9NSU2-1</id>
        <label>TREX1</label>
    </interactant>
    <organismsDiffer>false</organismsDiffer>
    <experiments>3</experiments>
</comment>
<comment type="interaction">
    <interactant intactId="EBI-10266796">
        <id>Q8N5M9</id>
    </interactant>
    <interactant intactId="EBI-12003468">
        <id>A0AVG3</id>
        <label>TSNARE1</label>
    </interactant>
    <organismsDiffer>false</organismsDiffer>
    <experiments>3</experiments>
</comment>
<comment type="interaction">
    <interactant intactId="EBI-10266796">
        <id>Q8N5M9</id>
    </interactant>
    <interactant intactId="EBI-988826">
        <id>Q9Y385</id>
        <label>UBE2J1</label>
    </interactant>
    <organismsDiffer>false</organismsDiffer>
    <experiments>3</experiments>
</comment>
<comment type="interaction">
    <interactant intactId="EBI-10266796">
        <id>Q8N5M9</id>
    </interactant>
    <interactant intactId="EBI-742842">
        <id>Q9NZ43</id>
        <label>USE1</label>
    </interactant>
    <organismsDiffer>false</organismsDiffer>
    <experiments>3</experiments>
</comment>
<comment type="interaction">
    <interactant intactId="EBI-10266796">
        <id>Q8N5M9</id>
    </interactant>
    <interactant intactId="EBI-520113">
        <id>P63027</id>
        <label>VAMP2</label>
    </interactant>
    <organismsDiffer>false</organismsDiffer>
    <experiments>3</experiments>
</comment>
<comment type="interaction">
    <interactant intactId="EBI-10266796">
        <id>Q8N5M9</id>
    </interactant>
    <interactant intactId="EBI-10191195">
        <id>O95183</id>
        <label>VAMP5</label>
    </interactant>
    <organismsDiffer>false</organismsDiffer>
    <experiments>3</experiments>
</comment>
<comment type="interaction">
    <interactant intactId="EBI-10266796">
        <id>Q8N5M9</id>
    </interactant>
    <interactant intactId="EBI-1059156">
        <id>Q9P0L0</id>
        <label>VAPA</label>
    </interactant>
    <organismsDiffer>false</organismsDiffer>
    <experiments>3</experiments>
</comment>
<comment type="interaction">
    <interactant intactId="EBI-10266796">
        <id>Q8N5M9</id>
    </interactant>
    <interactant intactId="EBI-1188298">
        <id>O95292</id>
        <label>VAPB</label>
    </interactant>
    <organismsDiffer>false</organismsDiffer>
    <experiments>3</experiments>
</comment>
<comment type="interaction">
    <interactant intactId="EBI-10266796">
        <id>Q8N5M9</id>
    </interactant>
    <interactant intactId="EBI-903131">
        <id>Q9Y279</id>
        <label>VSIG4</label>
    </interactant>
    <organismsDiffer>false</organismsDiffer>
    <experiments>3</experiments>
</comment>
<comment type="interaction">
    <interactant intactId="EBI-10266796">
        <id>Q8N5M9</id>
    </interactant>
    <interactant intactId="EBI-723716">
        <id>Q9UEU0</id>
        <label>VTI1B</label>
    </interactant>
    <organismsDiffer>false</organismsDiffer>
    <experiments>3</experiments>
</comment>
<comment type="subcellular location">
    <subcellularLocation>
        <location evidence="2">Endoplasmic reticulum membrane</location>
        <topology evidence="1">Multi-pass membrane protein</topology>
    </subcellularLocation>
</comment>
<comment type="tissue specificity">
    <text evidence="2">Ubiquitously expressed.</text>
</comment>
<comment type="disease" evidence="2">
    <disease id="DI-04232">
        <name>Neutropenia, severe congenital 6, autosomal recessive</name>
        <acronym>SCN6</acronym>
        <description>A disorder of hematopoiesis characterized by maturation arrest of granulopoiesis at the level of promyelocytes with peripheral blood absolute neutrophil counts below 0.5 x 10(9)/l and early onset of severe bacterial infections.</description>
        <dbReference type="MIM" id="616022"/>
    </disease>
    <text>The disease is caused by variants affecting the gene represented in this entry.</text>
</comment>
<comment type="similarity">
    <text evidence="3">Belongs to the jagunal family.</text>
</comment>
<comment type="caution">
    <text evidence="2 3">Experiments in mouse confirm the importance of JAGN1 in neutrophil function with some differences. Mice lacking JAGN1 do not show neutropenia and display increased susceptibility to fungal infections due to defective killing capacity of neutrophil granulocytes.</text>
</comment>